<reference key="1">
    <citation type="submission" date="2008-06" db="EMBL/GenBank/DDBJ databases">
        <title>Complete sequence of Pelodictyon phaeoclathratiforme BU-1.</title>
        <authorList>
            <consortium name="US DOE Joint Genome Institute"/>
            <person name="Lucas S."/>
            <person name="Copeland A."/>
            <person name="Lapidus A."/>
            <person name="Glavina del Rio T."/>
            <person name="Dalin E."/>
            <person name="Tice H."/>
            <person name="Bruce D."/>
            <person name="Goodwin L."/>
            <person name="Pitluck S."/>
            <person name="Schmutz J."/>
            <person name="Larimer F."/>
            <person name="Land M."/>
            <person name="Hauser L."/>
            <person name="Kyrpides N."/>
            <person name="Mikhailova N."/>
            <person name="Liu Z."/>
            <person name="Li T."/>
            <person name="Zhao F."/>
            <person name="Overmann J."/>
            <person name="Bryant D.A."/>
            <person name="Richardson P."/>
        </authorList>
    </citation>
    <scope>NUCLEOTIDE SEQUENCE [LARGE SCALE GENOMIC DNA]</scope>
    <source>
        <strain>DSM 5477 / BU-1</strain>
    </source>
</reference>
<name>RUVB_PELPB</name>
<evidence type="ECO:0000255" key="1">
    <source>
        <dbReference type="HAMAP-Rule" id="MF_00016"/>
    </source>
</evidence>
<comment type="function">
    <text evidence="1">The RuvA-RuvB-RuvC complex processes Holliday junction (HJ) DNA during genetic recombination and DNA repair, while the RuvA-RuvB complex plays an important role in the rescue of blocked DNA replication forks via replication fork reversal (RFR). RuvA specifically binds to HJ cruciform DNA, conferring on it an open structure. The RuvB hexamer acts as an ATP-dependent pump, pulling dsDNA into and through the RuvAB complex. RuvB forms 2 homohexamers on either side of HJ DNA bound by 1 or 2 RuvA tetramers; 4 subunits per hexamer contact DNA at a time. Coordinated motions by a converter formed by DNA-disengaged RuvB subunits stimulates ATP hydrolysis and nucleotide exchange. Immobilization of the converter enables RuvB to convert the ATP-contained energy into a lever motion, pulling 2 nucleotides of DNA out of the RuvA tetramer per ATP hydrolyzed, thus driving DNA branch migration. The RuvB motors rotate together with the DNA substrate, which together with the progressing nucleotide cycle form the mechanistic basis for DNA recombination by continuous HJ branch migration. Branch migration allows RuvC to scan DNA until it finds its consensus sequence, where it cleaves and resolves cruciform DNA.</text>
</comment>
<comment type="catalytic activity">
    <reaction evidence="1">
        <text>ATP + H2O = ADP + phosphate + H(+)</text>
        <dbReference type="Rhea" id="RHEA:13065"/>
        <dbReference type="ChEBI" id="CHEBI:15377"/>
        <dbReference type="ChEBI" id="CHEBI:15378"/>
        <dbReference type="ChEBI" id="CHEBI:30616"/>
        <dbReference type="ChEBI" id="CHEBI:43474"/>
        <dbReference type="ChEBI" id="CHEBI:456216"/>
    </reaction>
</comment>
<comment type="subunit">
    <text evidence="1">Homohexamer. Forms an RuvA(8)-RuvB(12)-Holliday junction (HJ) complex. HJ DNA is sandwiched between 2 RuvA tetramers; dsDNA enters through RuvA and exits via RuvB. An RuvB hexamer assembles on each DNA strand where it exits the tetramer. Each RuvB hexamer is contacted by two RuvA subunits (via domain III) on 2 adjacent RuvB subunits; this complex drives branch migration. In the full resolvosome a probable DNA-RuvA(4)-RuvB(12)-RuvC(2) complex forms which resolves the HJ.</text>
</comment>
<comment type="subcellular location">
    <subcellularLocation>
        <location evidence="1">Cytoplasm</location>
    </subcellularLocation>
</comment>
<comment type="domain">
    <text evidence="1">Has 3 domains, the large (RuvB-L) and small ATPase (RuvB-S) domains and the C-terminal head (RuvB-H) domain. The head domain binds DNA, while the ATPase domains jointly bind ATP, ADP or are empty depending on the state of the subunit in the translocation cycle. During a single DNA translocation step the structure of each domain remains the same, but their relative positions change.</text>
</comment>
<comment type="similarity">
    <text evidence="1">Belongs to the RuvB family.</text>
</comment>
<sequence length="344" mass="37758">MRIELLNTPPDASETRIEEQIRPLRMDAFAGQQRLTDNLRVFISAAKMRGEALDHVLLSGPPGLGKTTLAYIIASEMGSSIKSTSGPLLDKAGNLAGLLTGLQKGDVLFIDEIHRMPPTVEEYLYSAMEDFRIDIMLDSGPSARAVQLRIEPFTLVGATTRSGLLTSPLRARFGINSRFDYYAPELLEGIIRRASTILGIGIDAEAASEIAGRSRGTPRIANRLLRRARDFAQVDGESFISRSIAMKTLDCLEIDEEGLDDMDKKIMETIVNKFNGGPVGIASLAVSVGEEQDTIEEVYEPYLIQAGYLTRTTRGRVATRQALIRFSTASERDEISLFDAQPTS</sequence>
<organism>
    <name type="scientific">Pelodictyon phaeoclathratiforme (strain DSM 5477 / BU-1)</name>
    <dbReference type="NCBI Taxonomy" id="324925"/>
    <lineage>
        <taxon>Bacteria</taxon>
        <taxon>Pseudomonadati</taxon>
        <taxon>Chlorobiota</taxon>
        <taxon>Chlorobiia</taxon>
        <taxon>Chlorobiales</taxon>
        <taxon>Chlorobiaceae</taxon>
        <taxon>Chlorobium/Pelodictyon group</taxon>
        <taxon>Pelodictyon</taxon>
    </lineage>
</organism>
<gene>
    <name evidence="1" type="primary">ruvB</name>
    <name type="ordered locus">Ppha_0693</name>
</gene>
<protein>
    <recommendedName>
        <fullName evidence="1">Holliday junction branch migration complex subunit RuvB</fullName>
        <ecNumber evidence="1">3.6.4.-</ecNumber>
    </recommendedName>
</protein>
<dbReference type="EC" id="3.6.4.-" evidence="1"/>
<dbReference type="EMBL" id="CP001110">
    <property type="protein sequence ID" value="ACF42988.1"/>
    <property type="molecule type" value="Genomic_DNA"/>
</dbReference>
<dbReference type="RefSeq" id="WP_012507483.1">
    <property type="nucleotide sequence ID" value="NC_011060.1"/>
</dbReference>
<dbReference type="SMR" id="B4SDZ7"/>
<dbReference type="STRING" id="324925.Ppha_0693"/>
<dbReference type="KEGG" id="pph:Ppha_0693"/>
<dbReference type="eggNOG" id="COG2255">
    <property type="taxonomic scope" value="Bacteria"/>
</dbReference>
<dbReference type="HOGENOM" id="CLU_055599_1_0_10"/>
<dbReference type="OrthoDB" id="9804478at2"/>
<dbReference type="Proteomes" id="UP000002724">
    <property type="component" value="Chromosome"/>
</dbReference>
<dbReference type="GO" id="GO:0005737">
    <property type="term" value="C:cytoplasm"/>
    <property type="evidence" value="ECO:0007669"/>
    <property type="project" value="UniProtKB-SubCell"/>
</dbReference>
<dbReference type="GO" id="GO:0048476">
    <property type="term" value="C:Holliday junction resolvase complex"/>
    <property type="evidence" value="ECO:0007669"/>
    <property type="project" value="UniProtKB-UniRule"/>
</dbReference>
<dbReference type="GO" id="GO:0005524">
    <property type="term" value="F:ATP binding"/>
    <property type="evidence" value="ECO:0007669"/>
    <property type="project" value="UniProtKB-UniRule"/>
</dbReference>
<dbReference type="GO" id="GO:0016887">
    <property type="term" value="F:ATP hydrolysis activity"/>
    <property type="evidence" value="ECO:0007669"/>
    <property type="project" value="InterPro"/>
</dbReference>
<dbReference type="GO" id="GO:0000400">
    <property type="term" value="F:four-way junction DNA binding"/>
    <property type="evidence" value="ECO:0007669"/>
    <property type="project" value="UniProtKB-UniRule"/>
</dbReference>
<dbReference type="GO" id="GO:0009378">
    <property type="term" value="F:four-way junction helicase activity"/>
    <property type="evidence" value="ECO:0007669"/>
    <property type="project" value="InterPro"/>
</dbReference>
<dbReference type="GO" id="GO:0006310">
    <property type="term" value="P:DNA recombination"/>
    <property type="evidence" value="ECO:0007669"/>
    <property type="project" value="UniProtKB-UniRule"/>
</dbReference>
<dbReference type="GO" id="GO:0006281">
    <property type="term" value="P:DNA repair"/>
    <property type="evidence" value="ECO:0007669"/>
    <property type="project" value="UniProtKB-UniRule"/>
</dbReference>
<dbReference type="CDD" id="cd00009">
    <property type="entry name" value="AAA"/>
    <property type="match status" value="1"/>
</dbReference>
<dbReference type="Gene3D" id="1.10.8.60">
    <property type="match status" value="1"/>
</dbReference>
<dbReference type="Gene3D" id="3.40.50.300">
    <property type="entry name" value="P-loop containing nucleotide triphosphate hydrolases"/>
    <property type="match status" value="1"/>
</dbReference>
<dbReference type="Gene3D" id="1.10.10.10">
    <property type="entry name" value="Winged helix-like DNA-binding domain superfamily/Winged helix DNA-binding domain"/>
    <property type="match status" value="1"/>
</dbReference>
<dbReference type="HAMAP" id="MF_00016">
    <property type="entry name" value="DNA_HJ_migration_RuvB"/>
    <property type="match status" value="1"/>
</dbReference>
<dbReference type="InterPro" id="IPR003593">
    <property type="entry name" value="AAA+_ATPase"/>
</dbReference>
<dbReference type="InterPro" id="IPR041445">
    <property type="entry name" value="AAA_lid_4"/>
</dbReference>
<dbReference type="InterPro" id="IPR004605">
    <property type="entry name" value="DNA_helicase_Holl-junc_RuvB"/>
</dbReference>
<dbReference type="InterPro" id="IPR027417">
    <property type="entry name" value="P-loop_NTPase"/>
</dbReference>
<dbReference type="InterPro" id="IPR008824">
    <property type="entry name" value="RuvB-like_N"/>
</dbReference>
<dbReference type="InterPro" id="IPR008823">
    <property type="entry name" value="RuvB_C"/>
</dbReference>
<dbReference type="InterPro" id="IPR036388">
    <property type="entry name" value="WH-like_DNA-bd_sf"/>
</dbReference>
<dbReference type="InterPro" id="IPR036390">
    <property type="entry name" value="WH_DNA-bd_sf"/>
</dbReference>
<dbReference type="NCBIfam" id="NF000868">
    <property type="entry name" value="PRK00080.1"/>
    <property type="match status" value="1"/>
</dbReference>
<dbReference type="NCBIfam" id="TIGR00635">
    <property type="entry name" value="ruvB"/>
    <property type="match status" value="1"/>
</dbReference>
<dbReference type="PANTHER" id="PTHR42848">
    <property type="match status" value="1"/>
</dbReference>
<dbReference type="PANTHER" id="PTHR42848:SF1">
    <property type="entry name" value="HOLLIDAY JUNCTION BRANCH MIGRATION COMPLEX SUBUNIT RUVB"/>
    <property type="match status" value="1"/>
</dbReference>
<dbReference type="Pfam" id="PF17864">
    <property type="entry name" value="AAA_lid_4"/>
    <property type="match status" value="1"/>
</dbReference>
<dbReference type="Pfam" id="PF05491">
    <property type="entry name" value="RuvB_C"/>
    <property type="match status" value="1"/>
</dbReference>
<dbReference type="Pfam" id="PF05496">
    <property type="entry name" value="RuvB_N"/>
    <property type="match status" value="1"/>
</dbReference>
<dbReference type="SMART" id="SM00382">
    <property type="entry name" value="AAA"/>
    <property type="match status" value="1"/>
</dbReference>
<dbReference type="SUPFAM" id="SSF52540">
    <property type="entry name" value="P-loop containing nucleoside triphosphate hydrolases"/>
    <property type="match status" value="1"/>
</dbReference>
<dbReference type="SUPFAM" id="SSF46785">
    <property type="entry name" value="Winged helix' DNA-binding domain"/>
    <property type="match status" value="1"/>
</dbReference>
<keyword id="KW-0067">ATP-binding</keyword>
<keyword id="KW-0963">Cytoplasm</keyword>
<keyword id="KW-0227">DNA damage</keyword>
<keyword id="KW-0233">DNA recombination</keyword>
<keyword id="KW-0234">DNA repair</keyword>
<keyword id="KW-0238">DNA-binding</keyword>
<keyword id="KW-0378">Hydrolase</keyword>
<keyword id="KW-0547">Nucleotide-binding</keyword>
<keyword id="KW-1185">Reference proteome</keyword>
<feature type="chain" id="PRO_1000089661" description="Holliday junction branch migration complex subunit RuvB">
    <location>
        <begin position="1"/>
        <end position="344"/>
    </location>
</feature>
<feature type="region of interest" description="Large ATPase domain (RuvB-L)" evidence="1">
    <location>
        <begin position="1"/>
        <end position="182"/>
    </location>
</feature>
<feature type="region of interest" description="Small ATPAse domain (RuvB-S)" evidence="1">
    <location>
        <begin position="183"/>
        <end position="253"/>
    </location>
</feature>
<feature type="region of interest" description="Head domain (RuvB-H)" evidence="1">
    <location>
        <begin position="256"/>
        <end position="344"/>
    </location>
</feature>
<feature type="binding site" evidence="1">
    <location>
        <position position="21"/>
    </location>
    <ligand>
        <name>ATP</name>
        <dbReference type="ChEBI" id="CHEBI:30616"/>
    </ligand>
</feature>
<feature type="binding site" evidence="1">
    <location>
        <position position="22"/>
    </location>
    <ligand>
        <name>ATP</name>
        <dbReference type="ChEBI" id="CHEBI:30616"/>
    </ligand>
</feature>
<feature type="binding site" evidence="1">
    <location>
        <position position="63"/>
    </location>
    <ligand>
        <name>ATP</name>
        <dbReference type="ChEBI" id="CHEBI:30616"/>
    </ligand>
</feature>
<feature type="binding site" evidence="1">
    <location>
        <position position="66"/>
    </location>
    <ligand>
        <name>ATP</name>
        <dbReference type="ChEBI" id="CHEBI:30616"/>
    </ligand>
</feature>
<feature type="binding site" evidence="1">
    <location>
        <position position="67"/>
    </location>
    <ligand>
        <name>ATP</name>
        <dbReference type="ChEBI" id="CHEBI:30616"/>
    </ligand>
</feature>
<feature type="binding site" evidence="1">
    <location>
        <position position="67"/>
    </location>
    <ligand>
        <name>Mg(2+)</name>
        <dbReference type="ChEBI" id="CHEBI:18420"/>
    </ligand>
</feature>
<feature type="binding site" evidence="1">
    <location>
        <position position="68"/>
    </location>
    <ligand>
        <name>ATP</name>
        <dbReference type="ChEBI" id="CHEBI:30616"/>
    </ligand>
</feature>
<feature type="binding site" evidence="1">
    <location>
        <begin position="129"/>
        <end position="131"/>
    </location>
    <ligand>
        <name>ATP</name>
        <dbReference type="ChEBI" id="CHEBI:30616"/>
    </ligand>
</feature>
<feature type="binding site" evidence="1">
    <location>
        <position position="172"/>
    </location>
    <ligand>
        <name>ATP</name>
        <dbReference type="ChEBI" id="CHEBI:30616"/>
    </ligand>
</feature>
<feature type="binding site" evidence="1">
    <location>
        <position position="182"/>
    </location>
    <ligand>
        <name>ATP</name>
        <dbReference type="ChEBI" id="CHEBI:30616"/>
    </ligand>
</feature>
<feature type="binding site" evidence="1">
    <location>
        <position position="219"/>
    </location>
    <ligand>
        <name>ATP</name>
        <dbReference type="ChEBI" id="CHEBI:30616"/>
    </ligand>
</feature>
<feature type="binding site" evidence="1">
    <location>
        <position position="311"/>
    </location>
    <ligand>
        <name>DNA</name>
        <dbReference type="ChEBI" id="CHEBI:16991"/>
    </ligand>
</feature>
<feature type="binding site" evidence="1">
    <location>
        <position position="316"/>
    </location>
    <ligand>
        <name>DNA</name>
        <dbReference type="ChEBI" id="CHEBI:16991"/>
    </ligand>
</feature>
<accession>B4SDZ7</accession>
<proteinExistence type="inferred from homology"/>